<feature type="chain" id="PRO_0000062081" description="Large ribosomal subunit protein uL16">
    <location>
        <begin position="1"/>
        <end position="147"/>
    </location>
</feature>
<evidence type="ECO:0000255" key="1">
    <source>
        <dbReference type="HAMAP-Rule" id="MF_01342"/>
    </source>
</evidence>
<evidence type="ECO:0000305" key="2"/>
<protein>
    <recommendedName>
        <fullName evidence="1">Large ribosomal subunit protein uL16</fullName>
    </recommendedName>
    <alternativeName>
        <fullName evidence="2">50S ribosomal protein L16</fullName>
    </alternativeName>
</protein>
<proteinExistence type="inferred from homology"/>
<organism>
    <name type="scientific">Clostridium acetobutylicum (strain ATCC 824 / DSM 792 / JCM 1419 / IAM 19013 / LMG 5710 / NBRC 13948 / NRRL B-527 / VKM B-1787 / 2291 / W)</name>
    <dbReference type="NCBI Taxonomy" id="272562"/>
    <lineage>
        <taxon>Bacteria</taxon>
        <taxon>Bacillati</taxon>
        <taxon>Bacillota</taxon>
        <taxon>Clostridia</taxon>
        <taxon>Eubacteriales</taxon>
        <taxon>Clostridiaceae</taxon>
        <taxon>Clostridium</taxon>
    </lineage>
</organism>
<dbReference type="EMBL" id="AE001437">
    <property type="protein sequence ID" value="AAK81065.1"/>
    <property type="molecule type" value="Genomic_DNA"/>
</dbReference>
<dbReference type="PIR" id="F97284">
    <property type="entry name" value="F97284"/>
</dbReference>
<dbReference type="RefSeq" id="NP_349725.1">
    <property type="nucleotide sequence ID" value="NC_003030.1"/>
</dbReference>
<dbReference type="RefSeq" id="WP_010966405.1">
    <property type="nucleotide sequence ID" value="NC_003030.1"/>
</dbReference>
<dbReference type="SMR" id="Q97EI5"/>
<dbReference type="STRING" id="272562.CA_C3126"/>
<dbReference type="GeneID" id="44999613"/>
<dbReference type="KEGG" id="cac:CA_C3126"/>
<dbReference type="PATRIC" id="fig|272562.8.peg.3309"/>
<dbReference type="eggNOG" id="COG0197">
    <property type="taxonomic scope" value="Bacteria"/>
</dbReference>
<dbReference type="HOGENOM" id="CLU_078858_2_1_9"/>
<dbReference type="OrthoDB" id="9802589at2"/>
<dbReference type="Proteomes" id="UP000000814">
    <property type="component" value="Chromosome"/>
</dbReference>
<dbReference type="GO" id="GO:0022625">
    <property type="term" value="C:cytosolic large ribosomal subunit"/>
    <property type="evidence" value="ECO:0007669"/>
    <property type="project" value="TreeGrafter"/>
</dbReference>
<dbReference type="GO" id="GO:0019843">
    <property type="term" value="F:rRNA binding"/>
    <property type="evidence" value="ECO:0007669"/>
    <property type="project" value="UniProtKB-UniRule"/>
</dbReference>
<dbReference type="GO" id="GO:0003735">
    <property type="term" value="F:structural constituent of ribosome"/>
    <property type="evidence" value="ECO:0007669"/>
    <property type="project" value="InterPro"/>
</dbReference>
<dbReference type="GO" id="GO:0000049">
    <property type="term" value="F:tRNA binding"/>
    <property type="evidence" value="ECO:0007669"/>
    <property type="project" value="UniProtKB-KW"/>
</dbReference>
<dbReference type="GO" id="GO:0006412">
    <property type="term" value="P:translation"/>
    <property type="evidence" value="ECO:0007669"/>
    <property type="project" value="UniProtKB-UniRule"/>
</dbReference>
<dbReference type="CDD" id="cd01433">
    <property type="entry name" value="Ribosomal_L16_L10e"/>
    <property type="match status" value="1"/>
</dbReference>
<dbReference type="FunFam" id="3.90.1170.10:FF:000001">
    <property type="entry name" value="50S ribosomal protein L16"/>
    <property type="match status" value="1"/>
</dbReference>
<dbReference type="Gene3D" id="3.90.1170.10">
    <property type="entry name" value="Ribosomal protein L10e/L16"/>
    <property type="match status" value="1"/>
</dbReference>
<dbReference type="HAMAP" id="MF_01342">
    <property type="entry name" value="Ribosomal_uL16"/>
    <property type="match status" value="1"/>
</dbReference>
<dbReference type="InterPro" id="IPR047873">
    <property type="entry name" value="Ribosomal_uL16"/>
</dbReference>
<dbReference type="InterPro" id="IPR000114">
    <property type="entry name" value="Ribosomal_uL16_bact-type"/>
</dbReference>
<dbReference type="InterPro" id="IPR020798">
    <property type="entry name" value="Ribosomal_uL16_CS"/>
</dbReference>
<dbReference type="InterPro" id="IPR016180">
    <property type="entry name" value="Ribosomal_uL16_dom"/>
</dbReference>
<dbReference type="InterPro" id="IPR036920">
    <property type="entry name" value="Ribosomal_uL16_sf"/>
</dbReference>
<dbReference type="NCBIfam" id="TIGR01164">
    <property type="entry name" value="rplP_bact"/>
    <property type="match status" value="1"/>
</dbReference>
<dbReference type="PANTHER" id="PTHR12220">
    <property type="entry name" value="50S/60S RIBOSOMAL PROTEIN L16"/>
    <property type="match status" value="1"/>
</dbReference>
<dbReference type="PANTHER" id="PTHR12220:SF13">
    <property type="entry name" value="LARGE RIBOSOMAL SUBUNIT PROTEIN UL16M"/>
    <property type="match status" value="1"/>
</dbReference>
<dbReference type="Pfam" id="PF00252">
    <property type="entry name" value="Ribosomal_L16"/>
    <property type="match status" value="1"/>
</dbReference>
<dbReference type="PRINTS" id="PR00060">
    <property type="entry name" value="RIBOSOMALL16"/>
</dbReference>
<dbReference type="SUPFAM" id="SSF54686">
    <property type="entry name" value="Ribosomal protein L16p/L10e"/>
    <property type="match status" value="1"/>
</dbReference>
<dbReference type="PROSITE" id="PS00586">
    <property type="entry name" value="RIBOSOMAL_L16_1"/>
    <property type="match status" value="1"/>
</dbReference>
<dbReference type="PROSITE" id="PS00701">
    <property type="entry name" value="RIBOSOMAL_L16_2"/>
    <property type="match status" value="1"/>
</dbReference>
<name>RL16_CLOAB</name>
<accession>Q97EI5</accession>
<keyword id="KW-1185">Reference proteome</keyword>
<keyword id="KW-0687">Ribonucleoprotein</keyword>
<keyword id="KW-0689">Ribosomal protein</keyword>
<keyword id="KW-0694">RNA-binding</keyword>
<keyword id="KW-0699">rRNA-binding</keyword>
<keyword id="KW-0820">tRNA-binding</keyword>
<comment type="function">
    <text evidence="1">Binds 23S rRNA and is also seen to make contacts with the A and possibly P site tRNAs.</text>
</comment>
<comment type="subunit">
    <text evidence="1">Part of the 50S ribosomal subunit.</text>
</comment>
<comment type="similarity">
    <text evidence="1">Belongs to the universal ribosomal protein uL16 family.</text>
</comment>
<sequence length="147" mass="16685">MLMPKRVKHRKVQRGRMKGKATRGNFIAYGDFAIQATECAWITSNQIEAARIAINRYVKRGGKLWIKIFPDKPVTQKPAETRMGSGKGSPEYWVAVVKPGRVLFEMSDVTEEQAREAFRLASHKLPIKTKFVTRKDFEEMGGEANEG</sequence>
<gene>
    <name evidence="1" type="primary">rplP</name>
    <name type="ordered locus">CA_C3126</name>
</gene>
<reference key="1">
    <citation type="journal article" date="2001" name="J. Bacteriol.">
        <title>Genome sequence and comparative analysis of the solvent-producing bacterium Clostridium acetobutylicum.</title>
        <authorList>
            <person name="Noelling J."/>
            <person name="Breton G."/>
            <person name="Omelchenko M.V."/>
            <person name="Makarova K.S."/>
            <person name="Zeng Q."/>
            <person name="Gibson R."/>
            <person name="Lee H.M."/>
            <person name="Dubois J."/>
            <person name="Qiu D."/>
            <person name="Hitti J."/>
            <person name="Wolf Y.I."/>
            <person name="Tatusov R.L."/>
            <person name="Sabathe F."/>
            <person name="Doucette-Stamm L.A."/>
            <person name="Soucaille P."/>
            <person name="Daly M.J."/>
            <person name="Bennett G.N."/>
            <person name="Koonin E.V."/>
            <person name="Smith D.R."/>
        </authorList>
    </citation>
    <scope>NUCLEOTIDE SEQUENCE [LARGE SCALE GENOMIC DNA]</scope>
    <source>
        <strain>ATCC 824 / DSM 792 / JCM 1419 / IAM 19013 / LMG 5710 / NBRC 13948 / NRRL B-527 / VKM B-1787 / 2291 / W</strain>
    </source>
</reference>